<evidence type="ECO:0000255" key="1">
    <source>
        <dbReference type="HAMAP-Rule" id="MF_00675"/>
    </source>
</evidence>
<keyword id="KW-0413">Isomerase</keyword>
<dbReference type="EC" id="5.3.1.12" evidence="1"/>
<dbReference type="EMBL" id="CU928162">
    <property type="protein sequence ID" value="CAR09763.1"/>
    <property type="molecule type" value="Genomic_DNA"/>
</dbReference>
<dbReference type="RefSeq" id="WP_000187442.1">
    <property type="nucleotide sequence ID" value="NC_011745.1"/>
</dbReference>
<dbReference type="SMR" id="B7N095"/>
<dbReference type="GeneID" id="93778895"/>
<dbReference type="KEGG" id="ecq:ECED1_3759"/>
<dbReference type="HOGENOM" id="CLU_044465_1_0_6"/>
<dbReference type="UniPathway" id="UPA00246"/>
<dbReference type="Proteomes" id="UP000000748">
    <property type="component" value="Chromosome"/>
</dbReference>
<dbReference type="GO" id="GO:0008880">
    <property type="term" value="F:glucuronate isomerase activity"/>
    <property type="evidence" value="ECO:0007669"/>
    <property type="project" value="UniProtKB-UniRule"/>
</dbReference>
<dbReference type="GO" id="GO:0019698">
    <property type="term" value="P:D-galacturonate catabolic process"/>
    <property type="evidence" value="ECO:0007669"/>
    <property type="project" value="TreeGrafter"/>
</dbReference>
<dbReference type="GO" id="GO:0042840">
    <property type="term" value="P:D-glucuronate catabolic process"/>
    <property type="evidence" value="ECO:0007669"/>
    <property type="project" value="TreeGrafter"/>
</dbReference>
<dbReference type="FunFam" id="1.10.2020.10:FF:000001">
    <property type="entry name" value="Uronate isomerase"/>
    <property type="match status" value="1"/>
</dbReference>
<dbReference type="Gene3D" id="3.20.20.140">
    <property type="entry name" value="Metal-dependent hydrolases"/>
    <property type="match status" value="1"/>
</dbReference>
<dbReference type="Gene3D" id="1.10.2020.10">
    <property type="entry name" value="uronate isomerase, domain 2, chain A"/>
    <property type="match status" value="1"/>
</dbReference>
<dbReference type="HAMAP" id="MF_00675">
    <property type="entry name" value="UxaC"/>
    <property type="match status" value="1"/>
</dbReference>
<dbReference type="InterPro" id="IPR032466">
    <property type="entry name" value="Metal_Hydrolase"/>
</dbReference>
<dbReference type="InterPro" id="IPR003766">
    <property type="entry name" value="Uronate_isomerase"/>
</dbReference>
<dbReference type="NCBIfam" id="NF002794">
    <property type="entry name" value="PRK02925.1"/>
    <property type="match status" value="1"/>
</dbReference>
<dbReference type="PANTHER" id="PTHR30068">
    <property type="entry name" value="URONATE ISOMERASE"/>
    <property type="match status" value="1"/>
</dbReference>
<dbReference type="PANTHER" id="PTHR30068:SF4">
    <property type="entry name" value="URONATE ISOMERASE"/>
    <property type="match status" value="1"/>
</dbReference>
<dbReference type="Pfam" id="PF02614">
    <property type="entry name" value="UxaC"/>
    <property type="match status" value="1"/>
</dbReference>
<dbReference type="SUPFAM" id="SSF51556">
    <property type="entry name" value="Metallo-dependent hydrolases"/>
    <property type="match status" value="1"/>
</dbReference>
<reference key="1">
    <citation type="journal article" date="2009" name="PLoS Genet.">
        <title>Organised genome dynamics in the Escherichia coli species results in highly diverse adaptive paths.</title>
        <authorList>
            <person name="Touchon M."/>
            <person name="Hoede C."/>
            <person name="Tenaillon O."/>
            <person name="Barbe V."/>
            <person name="Baeriswyl S."/>
            <person name="Bidet P."/>
            <person name="Bingen E."/>
            <person name="Bonacorsi S."/>
            <person name="Bouchier C."/>
            <person name="Bouvet O."/>
            <person name="Calteau A."/>
            <person name="Chiapello H."/>
            <person name="Clermont O."/>
            <person name="Cruveiller S."/>
            <person name="Danchin A."/>
            <person name="Diard M."/>
            <person name="Dossat C."/>
            <person name="Karoui M.E."/>
            <person name="Frapy E."/>
            <person name="Garry L."/>
            <person name="Ghigo J.M."/>
            <person name="Gilles A.M."/>
            <person name="Johnson J."/>
            <person name="Le Bouguenec C."/>
            <person name="Lescat M."/>
            <person name="Mangenot S."/>
            <person name="Martinez-Jehanne V."/>
            <person name="Matic I."/>
            <person name="Nassif X."/>
            <person name="Oztas S."/>
            <person name="Petit M.A."/>
            <person name="Pichon C."/>
            <person name="Rouy Z."/>
            <person name="Ruf C.S."/>
            <person name="Schneider D."/>
            <person name="Tourret J."/>
            <person name="Vacherie B."/>
            <person name="Vallenet D."/>
            <person name="Medigue C."/>
            <person name="Rocha E.P.C."/>
            <person name="Denamur E."/>
        </authorList>
    </citation>
    <scope>NUCLEOTIDE SEQUENCE [LARGE SCALE GENOMIC DNA]</scope>
    <source>
        <strain>ED1a</strain>
    </source>
</reference>
<organism>
    <name type="scientific">Escherichia coli O81 (strain ED1a)</name>
    <dbReference type="NCBI Taxonomy" id="585397"/>
    <lineage>
        <taxon>Bacteria</taxon>
        <taxon>Pseudomonadati</taxon>
        <taxon>Pseudomonadota</taxon>
        <taxon>Gammaproteobacteria</taxon>
        <taxon>Enterobacterales</taxon>
        <taxon>Enterobacteriaceae</taxon>
        <taxon>Escherichia</taxon>
    </lineage>
</organism>
<gene>
    <name evidence="1" type="primary">uxaC</name>
    <name type="ordered locus">ECED1_3759</name>
</gene>
<feature type="chain" id="PRO_1000147690" description="Uronate isomerase">
    <location>
        <begin position="1"/>
        <end position="470"/>
    </location>
</feature>
<comment type="catalytic activity">
    <reaction evidence="1">
        <text>D-glucuronate = D-fructuronate</text>
        <dbReference type="Rhea" id="RHEA:13049"/>
        <dbReference type="ChEBI" id="CHEBI:58720"/>
        <dbReference type="ChEBI" id="CHEBI:59863"/>
        <dbReference type="EC" id="5.3.1.12"/>
    </reaction>
</comment>
<comment type="catalytic activity">
    <reaction evidence="1">
        <text>aldehydo-D-galacturonate = keto-D-tagaturonate</text>
        <dbReference type="Rhea" id="RHEA:27702"/>
        <dbReference type="ChEBI" id="CHEBI:12952"/>
        <dbReference type="ChEBI" id="CHEBI:17886"/>
        <dbReference type="EC" id="5.3.1.12"/>
    </reaction>
</comment>
<comment type="pathway">
    <text evidence="1">Carbohydrate metabolism; pentose and glucuronate interconversion.</text>
</comment>
<comment type="similarity">
    <text evidence="1">Belongs to the metallo-dependent hydrolases superfamily. Uronate isomerase family.</text>
</comment>
<name>UXAC_ECO81</name>
<protein>
    <recommendedName>
        <fullName evidence="1">Uronate isomerase</fullName>
        <ecNumber evidence="1">5.3.1.12</ecNumber>
    </recommendedName>
    <alternativeName>
        <fullName evidence="1">Glucuronate isomerase</fullName>
    </alternativeName>
    <alternativeName>
        <fullName evidence="1">Uronic isomerase</fullName>
    </alternativeName>
</protein>
<accession>B7N095</accession>
<proteinExistence type="inferred from homology"/>
<sequence>MTPFMTEDFLLDTEFARRLYHDYAKDQPIFDYHCHLPPQQIAEDYRFKNLYDIWLKGDHYKWRAMRTNGVAERLCTGDASDREKFDAWAATVPHTIGNPLYHWTHLELRRPFGITGKLLSPSTADEIWNECNELLAQDNFSARGIMQQMNVKMVGTTDDPIDSLEHHAEIAKDGSFTIKVLPSWRPDKAFNIEQATFNDYMAKLGEVSDTDIRRFADLQTALTKRLDHFAAHGCKVSDHALDVVMFAEANEAELDSILARRLAGETLSEHEVAQFKTAVLVFLGAEYARRGWVQQYHIGALRNNNLRQFKLLGPDVGFDSINDRPMAEELSKLLSKQNEENLLPKTILYCLNPRDNEVLGTMIGNFQGEGMPGKMQFGSGWWFNDQKDGMERQMTQLAQLGLLSRFVGMLTDSRSFLSYTRHEYFRRILCQMIGRWVEAGEAPADINLLGEMVKNICFNNARDYFAIELN</sequence>